<keyword id="KW-0378">Hydrolase</keyword>
<keyword id="KW-0460">Magnesium</keyword>
<keyword id="KW-0511">Multifunctional enzyme</keyword>
<keyword id="KW-0535">Nitrogen fixation</keyword>
<keyword id="KW-0548">Nucleotidyltransferase</keyword>
<keyword id="KW-0677">Repeat</keyword>
<keyword id="KW-0808">Transferase</keyword>
<sequence length="859" mass="97064">MSAHAAPSPEALSRRAEFKAAKADLLERFRSATNVTSLMHALSKLTDSALKRVWDDCGLPATLALVAVGGYGRGELAPHSDVDILVLLPDAHDPALDARIERFIGMAWDLGLEIGSSVRTVAQCIEEASQDVTVQTSLLEARRIFGSTALFERFTVRYHEEALDARAFFTAKVLEMRQRHAKFQDTPYSLEPNVKESPGGLRDLQTILWIARAAGFGSSWRELDTRGLITEREARELRRNEGFLKALRARLHVIAGRRQDVLVFDLQTQAAESFGYRPTQAKRASEQLMRRYYWAAKAVTQLATILIQNIEAQLFPATSGITRVLSHDRFVEKQGMLEIVDDGVFERHPDAILEAFLLYETTRGVKGLSARTLRALYNSREIMNDTWRRDAQNRHTFMQILQQPEGITHAFRLMNQTSVLGRYLLNFRRIVGQMQHDLYHVYTVDQHILMVLRNIRRFAVAEHAHEYPFCSQLIGNFERPWVLYVAALFHDIAKGRGGDHSTLGMADARRFCREHGIGGDDAALIVWLVQHHLTMSQVAQKQDTSDPEVIKRFAAIVGNERYLTALYLLTVADIRGTSPKVWNTWKGKLLEDLYRITLAVLGGAKPDAHSELKSRQEQALALLRLETVPDDAHRALWDQLDVGFFLRHDAADIAWQTRVLYRHVNAETAIVRARPSPIGDALQVLVYVKDRPDLFAGICAYFDRNGLSVLDARVSTTRHGYALDNFIVTQTERDVRYRDIANLVEQQLATRLAETAPLPEPSKGRLSRLSRTFPITPRVDLRADERGQYYILSVSANDRPGLLYSIARVLAEHRVGVHAARINTLGERVEDIFLLDGAGLSDNRLQIQLETELLRAIAV</sequence>
<proteinExistence type="inferred from homology"/>
<accession>A4JF78</accession>
<gene>
    <name evidence="1" type="primary">glnD</name>
    <name type="ordered locus">Bcep1808_1928</name>
</gene>
<reference key="1">
    <citation type="submission" date="2007-03" db="EMBL/GenBank/DDBJ databases">
        <title>Complete sequence of chromosome 1 of Burkholderia vietnamiensis G4.</title>
        <authorList>
            <consortium name="US DOE Joint Genome Institute"/>
            <person name="Copeland A."/>
            <person name="Lucas S."/>
            <person name="Lapidus A."/>
            <person name="Barry K."/>
            <person name="Detter J.C."/>
            <person name="Glavina del Rio T."/>
            <person name="Hammon N."/>
            <person name="Israni S."/>
            <person name="Dalin E."/>
            <person name="Tice H."/>
            <person name="Pitluck S."/>
            <person name="Chain P."/>
            <person name="Malfatti S."/>
            <person name="Shin M."/>
            <person name="Vergez L."/>
            <person name="Schmutz J."/>
            <person name="Larimer F."/>
            <person name="Land M."/>
            <person name="Hauser L."/>
            <person name="Kyrpides N."/>
            <person name="Tiedje J."/>
            <person name="Richardson P."/>
        </authorList>
    </citation>
    <scope>NUCLEOTIDE SEQUENCE [LARGE SCALE GENOMIC DNA]</scope>
    <source>
        <strain>G4 / LMG 22486</strain>
    </source>
</reference>
<organism>
    <name type="scientific">Burkholderia vietnamiensis (strain G4 / LMG 22486)</name>
    <name type="common">Burkholderia cepacia (strain R1808)</name>
    <dbReference type="NCBI Taxonomy" id="269482"/>
    <lineage>
        <taxon>Bacteria</taxon>
        <taxon>Pseudomonadati</taxon>
        <taxon>Pseudomonadota</taxon>
        <taxon>Betaproteobacteria</taxon>
        <taxon>Burkholderiales</taxon>
        <taxon>Burkholderiaceae</taxon>
        <taxon>Burkholderia</taxon>
        <taxon>Burkholderia cepacia complex</taxon>
    </lineage>
</organism>
<feature type="chain" id="PRO_1000022337" description="Bifunctional uridylyltransferase/uridylyl-removing enzyme">
    <location>
        <begin position="1"/>
        <end position="859"/>
    </location>
</feature>
<feature type="domain" description="HD" evidence="2">
    <location>
        <begin position="444"/>
        <end position="566"/>
    </location>
</feature>
<feature type="domain" description="ACT 1" evidence="1">
    <location>
        <begin position="683"/>
        <end position="762"/>
    </location>
</feature>
<feature type="domain" description="ACT 2" evidence="1">
    <location>
        <begin position="791"/>
        <end position="859"/>
    </location>
</feature>
<feature type="region of interest" description="Uridylyltransferase">
    <location>
        <begin position="1"/>
        <end position="325"/>
    </location>
</feature>
<feature type="region of interest" description="Uridylyl-removing">
    <location>
        <begin position="326"/>
        <end position="682"/>
    </location>
</feature>
<dbReference type="EC" id="2.7.7.59" evidence="1"/>
<dbReference type="EC" id="3.1.4.-" evidence="1"/>
<dbReference type="EMBL" id="CP000614">
    <property type="protein sequence ID" value="ABO54931.1"/>
    <property type="molecule type" value="Genomic_DNA"/>
</dbReference>
<dbReference type="SMR" id="A4JF78"/>
<dbReference type="KEGG" id="bvi:Bcep1808_1928"/>
<dbReference type="eggNOG" id="COG2844">
    <property type="taxonomic scope" value="Bacteria"/>
</dbReference>
<dbReference type="HOGENOM" id="CLU_012833_0_0_4"/>
<dbReference type="Proteomes" id="UP000002287">
    <property type="component" value="Chromosome 1"/>
</dbReference>
<dbReference type="GO" id="GO:0008773">
    <property type="term" value="F:[protein-PII] uridylyltransferase activity"/>
    <property type="evidence" value="ECO:0007669"/>
    <property type="project" value="UniProtKB-UniRule"/>
</dbReference>
<dbReference type="GO" id="GO:0008081">
    <property type="term" value="F:phosphoric diester hydrolase activity"/>
    <property type="evidence" value="ECO:0007669"/>
    <property type="project" value="UniProtKB-UniRule"/>
</dbReference>
<dbReference type="GO" id="GO:0009399">
    <property type="term" value="P:nitrogen fixation"/>
    <property type="evidence" value="ECO:0007669"/>
    <property type="project" value="UniProtKB-UniRule"/>
</dbReference>
<dbReference type="GO" id="GO:0006808">
    <property type="term" value="P:regulation of nitrogen utilization"/>
    <property type="evidence" value="ECO:0007669"/>
    <property type="project" value="UniProtKB-UniRule"/>
</dbReference>
<dbReference type="CDD" id="cd04899">
    <property type="entry name" value="ACT_ACR-UUR-like_2"/>
    <property type="match status" value="1"/>
</dbReference>
<dbReference type="CDD" id="cd04900">
    <property type="entry name" value="ACT_UUR-like_1"/>
    <property type="match status" value="1"/>
</dbReference>
<dbReference type="CDD" id="cd00077">
    <property type="entry name" value="HDc"/>
    <property type="match status" value="1"/>
</dbReference>
<dbReference type="CDD" id="cd05401">
    <property type="entry name" value="NT_GlnE_GlnD_like"/>
    <property type="match status" value="1"/>
</dbReference>
<dbReference type="Gene3D" id="3.30.70.260">
    <property type="match status" value="1"/>
</dbReference>
<dbReference type="Gene3D" id="3.30.460.10">
    <property type="entry name" value="Beta Polymerase, domain 2"/>
    <property type="match status" value="1"/>
</dbReference>
<dbReference type="Gene3D" id="1.10.3210.10">
    <property type="entry name" value="Hypothetical protein af1432"/>
    <property type="match status" value="1"/>
</dbReference>
<dbReference type="Gene3D" id="1.20.120.330">
    <property type="entry name" value="Nucleotidyltransferases domain 2"/>
    <property type="match status" value="1"/>
</dbReference>
<dbReference type="HAMAP" id="MF_00277">
    <property type="entry name" value="PII_uridylyl_transf"/>
    <property type="match status" value="1"/>
</dbReference>
<dbReference type="InterPro" id="IPR045865">
    <property type="entry name" value="ACT-like_dom_sf"/>
</dbReference>
<dbReference type="InterPro" id="IPR002912">
    <property type="entry name" value="ACT_dom"/>
</dbReference>
<dbReference type="InterPro" id="IPR003607">
    <property type="entry name" value="HD/PDEase_dom"/>
</dbReference>
<dbReference type="InterPro" id="IPR006674">
    <property type="entry name" value="HD_domain"/>
</dbReference>
<dbReference type="InterPro" id="IPR043519">
    <property type="entry name" value="NT_sf"/>
</dbReference>
<dbReference type="InterPro" id="IPR013546">
    <property type="entry name" value="PII_UdlTrfase/GS_AdlTrfase"/>
</dbReference>
<dbReference type="InterPro" id="IPR002934">
    <property type="entry name" value="Polymerase_NTP_transf_dom"/>
</dbReference>
<dbReference type="InterPro" id="IPR010043">
    <property type="entry name" value="UTase/UR"/>
</dbReference>
<dbReference type="NCBIfam" id="NF002837">
    <property type="entry name" value="PRK03059.1"/>
    <property type="match status" value="1"/>
</dbReference>
<dbReference type="NCBIfam" id="TIGR01693">
    <property type="entry name" value="UTase_glnD"/>
    <property type="match status" value="1"/>
</dbReference>
<dbReference type="PANTHER" id="PTHR47320">
    <property type="entry name" value="BIFUNCTIONAL URIDYLYLTRANSFERASE/URIDYLYL-REMOVING ENZYME"/>
    <property type="match status" value="1"/>
</dbReference>
<dbReference type="PANTHER" id="PTHR47320:SF1">
    <property type="entry name" value="BIFUNCTIONAL URIDYLYLTRANSFERASE_URIDYLYL-REMOVING ENZYME"/>
    <property type="match status" value="1"/>
</dbReference>
<dbReference type="Pfam" id="PF08335">
    <property type="entry name" value="GlnD_UR_UTase"/>
    <property type="match status" value="1"/>
</dbReference>
<dbReference type="Pfam" id="PF01966">
    <property type="entry name" value="HD"/>
    <property type="match status" value="1"/>
</dbReference>
<dbReference type="Pfam" id="PF01909">
    <property type="entry name" value="NTP_transf_2"/>
    <property type="match status" value="1"/>
</dbReference>
<dbReference type="PIRSF" id="PIRSF006288">
    <property type="entry name" value="PII_uridyltransf"/>
    <property type="match status" value="1"/>
</dbReference>
<dbReference type="SMART" id="SM00471">
    <property type="entry name" value="HDc"/>
    <property type="match status" value="1"/>
</dbReference>
<dbReference type="SUPFAM" id="SSF55021">
    <property type="entry name" value="ACT-like"/>
    <property type="match status" value="2"/>
</dbReference>
<dbReference type="SUPFAM" id="SSF109604">
    <property type="entry name" value="HD-domain/PDEase-like"/>
    <property type="match status" value="1"/>
</dbReference>
<dbReference type="SUPFAM" id="SSF81301">
    <property type="entry name" value="Nucleotidyltransferase"/>
    <property type="match status" value="1"/>
</dbReference>
<dbReference type="SUPFAM" id="SSF81593">
    <property type="entry name" value="Nucleotidyltransferase substrate binding subunit/domain"/>
    <property type="match status" value="1"/>
</dbReference>
<dbReference type="PROSITE" id="PS51671">
    <property type="entry name" value="ACT"/>
    <property type="match status" value="2"/>
</dbReference>
<dbReference type="PROSITE" id="PS51831">
    <property type="entry name" value="HD"/>
    <property type="match status" value="1"/>
</dbReference>
<protein>
    <recommendedName>
        <fullName evidence="1">Bifunctional uridylyltransferase/uridylyl-removing enzyme</fullName>
        <shortName evidence="1">UTase/UR</shortName>
    </recommendedName>
    <alternativeName>
        <fullName evidence="1">Bifunctional [protein-PII] modification enzyme</fullName>
    </alternativeName>
    <alternativeName>
        <fullName evidence="1">Bifunctional nitrogen sensor protein</fullName>
    </alternativeName>
    <domain>
        <recommendedName>
            <fullName evidence="1">[Protein-PII] uridylyltransferase</fullName>
            <shortName evidence="1">PII uridylyltransferase</shortName>
            <shortName evidence="1">UTase</shortName>
            <ecNumber evidence="1">2.7.7.59</ecNumber>
        </recommendedName>
    </domain>
    <domain>
        <recommendedName>
            <fullName evidence="1">[Protein-PII]-UMP uridylyl-removing enzyme</fullName>
            <shortName evidence="1">UR</shortName>
            <ecNumber evidence="1">3.1.4.-</ecNumber>
        </recommendedName>
    </domain>
</protein>
<evidence type="ECO:0000255" key="1">
    <source>
        <dbReference type="HAMAP-Rule" id="MF_00277"/>
    </source>
</evidence>
<evidence type="ECO:0000255" key="2">
    <source>
        <dbReference type="PROSITE-ProRule" id="PRU01175"/>
    </source>
</evidence>
<name>GLND_BURVG</name>
<comment type="function">
    <text evidence="1">Modifies, by uridylylation and deuridylylation, the PII regulatory proteins (GlnB and homologs), in response to the nitrogen status of the cell that GlnD senses through the glutamine level. Under low glutamine levels, catalyzes the conversion of the PII proteins and UTP to PII-UMP and PPi, while under higher glutamine levels, GlnD hydrolyzes PII-UMP to PII and UMP (deuridylylation). Thus, controls uridylylation state and activity of the PII proteins, and plays an important role in the regulation of nitrogen fixation and metabolism.</text>
</comment>
<comment type="catalytic activity">
    <reaction evidence="1">
        <text>[protein-PII]-L-tyrosine + UTP = [protein-PII]-uridylyl-L-tyrosine + diphosphate</text>
        <dbReference type="Rhea" id="RHEA:13673"/>
        <dbReference type="Rhea" id="RHEA-COMP:12147"/>
        <dbReference type="Rhea" id="RHEA-COMP:12148"/>
        <dbReference type="ChEBI" id="CHEBI:33019"/>
        <dbReference type="ChEBI" id="CHEBI:46398"/>
        <dbReference type="ChEBI" id="CHEBI:46858"/>
        <dbReference type="ChEBI" id="CHEBI:90602"/>
        <dbReference type="EC" id="2.7.7.59"/>
    </reaction>
</comment>
<comment type="catalytic activity">
    <reaction evidence="1">
        <text>[protein-PII]-uridylyl-L-tyrosine + H2O = [protein-PII]-L-tyrosine + UMP + H(+)</text>
        <dbReference type="Rhea" id="RHEA:48600"/>
        <dbReference type="Rhea" id="RHEA-COMP:12147"/>
        <dbReference type="Rhea" id="RHEA-COMP:12148"/>
        <dbReference type="ChEBI" id="CHEBI:15377"/>
        <dbReference type="ChEBI" id="CHEBI:15378"/>
        <dbReference type="ChEBI" id="CHEBI:46858"/>
        <dbReference type="ChEBI" id="CHEBI:57865"/>
        <dbReference type="ChEBI" id="CHEBI:90602"/>
    </reaction>
</comment>
<comment type="cofactor">
    <cofactor evidence="1">
        <name>Mg(2+)</name>
        <dbReference type="ChEBI" id="CHEBI:18420"/>
    </cofactor>
</comment>
<comment type="activity regulation">
    <text evidence="1">Uridylyltransferase (UTase) activity is inhibited by glutamine, while glutamine activates uridylyl-removing (UR) activity.</text>
</comment>
<comment type="domain">
    <text evidence="1">Has four distinct domains: an N-terminal nucleotidyltransferase (NT) domain responsible for UTase activity, a central HD domain that encodes UR activity, and two C-terminal ACT domains that seem to have a role in glutamine sensing.</text>
</comment>
<comment type="similarity">
    <text evidence="1">Belongs to the GlnD family.</text>
</comment>